<reference key="1">
    <citation type="journal article" date="2000" name="Nature">
        <title>Sequence and analysis of chromosome 1 of the plant Arabidopsis thaliana.</title>
        <authorList>
            <person name="Theologis A."/>
            <person name="Ecker J.R."/>
            <person name="Palm C.J."/>
            <person name="Federspiel N.A."/>
            <person name="Kaul S."/>
            <person name="White O."/>
            <person name="Alonso J."/>
            <person name="Altafi H."/>
            <person name="Araujo R."/>
            <person name="Bowman C.L."/>
            <person name="Brooks S.Y."/>
            <person name="Buehler E."/>
            <person name="Chan A."/>
            <person name="Chao Q."/>
            <person name="Chen H."/>
            <person name="Cheuk R.F."/>
            <person name="Chin C.W."/>
            <person name="Chung M.K."/>
            <person name="Conn L."/>
            <person name="Conway A.B."/>
            <person name="Conway A.R."/>
            <person name="Creasy T.H."/>
            <person name="Dewar K."/>
            <person name="Dunn P."/>
            <person name="Etgu P."/>
            <person name="Feldblyum T.V."/>
            <person name="Feng J.-D."/>
            <person name="Fong B."/>
            <person name="Fujii C.Y."/>
            <person name="Gill J.E."/>
            <person name="Goldsmith A.D."/>
            <person name="Haas B."/>
            <person name="Hansen N.F."/>
            <person name="Hughes B."/>
            <person name="Huizar L."/>
            <person name="Hunter J.L."/>
            <person name="Jenkins J."/>
            <person name="Johnson-Hopson C."/>
            <person name="Khan S."/>
            <person name="Khaykin E."/>
            <person name="Kim C.J."/>
            <person name="Koo H.L."/>
            <person name="Kremenetskaia I."/>
            <person name="Kurtz D.B."/>
            <person name="Kwan A."/>
            <person name="Lam B."/>
            <person name="Langin-Hooper S."/>
            <person name="Lee A."/>
            <person name="Lee J.M."/>
            <person name="Lenz C.A."/>
            <person name="Li J.H."/>
            <person name="Li Y.-P."/>
            <person name="Lin X."/>
            <person name="Liu S.X."/>
            <person name="Liu Z.A."/>
            <person name="Luros J.S."/>
            <person name="Maiti R."/>
            <person name="Marziali A."/>
            <person name="Militscher J."/>
            <person name="Miranda M."/>
            <person name="Nguyen M."/>
            <person name="Nierman W.C."/>
            <person name="Osborne B.I."/>
            <person name="Pai G."/>
            <person name="Peterson J."/>
            <person name="Pham P.K."/>
            <person name="Rizzo M."/>
            <person name="Rooney T."/>
            <person name="Rowley D."/>
            <person name="Sakano H."/>
            <person name="Salzberg S.L."/>
            <person name="Schwartz J.R."/>
            <person name="Shinn P."/>
            <person name="Southwick A.M."/>
            <person name="Sun H."/>
            <person name="Tallon L.J."/>
            <person name="Tambunga G."/>
            <person name="Toriumi M.J."/>
            <person name="Town C.D."/>
            <person name="Utterback T."/>
            <person name="Van Aken S."/>
            <person name="Vaysberg M."/>
            <person name="Vysotskaia V.S."/>
            <person name="Walker M."/>
            <person name="Wu D."/>
            <person name="Yu G."/>
            <person name="Fraser C.M."/>
            <person name="Venter J.C."/>
            <person name="Davis R.W."/>
        </authorList>
    </citation>
    <scope>NUCLEOTIDE SEQUENCE [LARGE SCALE GENOMIC DNA]</scope>
    <source>
        <strain>cv. Columbia</strain>
    </source>
</reference>
<reference key="2">
    <citation type="journal article" date="2017" name="Plant J.">
        <title>Araport11: a complete reannotation of the Arabidopsis thaliana reference genome.</title>
        <authorList>
            <person name="Cheng C.Y."/>
            <person name="Krishnakumar V."/>
            <person name="Chan A.P."/>
            <person name="Thibaud-Nissen F."/>
            <person name="Schobel S."/>
            <person name="Town C.D."/>
        </authorList>
    </citation>
    <scope>GENOME REANNOTATION</scope>
    <source>
        <strain>cv. Columbia</strain>
    </source>
</reference>
<reference key="3">
    <citation type="journal article" date="2006" name="J. Exp. Bot.">
        <title>Identification of dominant mutations that confer increased aluminum tolerance through mutagenesis of the Al-sensitive Arabidopsis mutant, als3-1.</title>
        <authorList>
            <person name="Gabrielson K.M."/>
            <person name="Cancel J.D."/>
            <person name="Morua L.F."/>
            <person name="Larsen P.B."/>
        </authorList>
    </citation>
    <scope>INDUCTION BY ALUMINUM</scope>
</reference>
<reference key="4">
    <citation type="journal article" date="2006" name="Proc. Natl. Acad. Sci. U.S.A.">
        <title>AtALMT1, which encodes a malate transporter, is identified as one of several genes critical for aluminum tolerance in Arabidopsis.</title>
        <authorList>
            <person name="Hoekenga O.A."/>
            <person name="Maron L.G."/>
            <person name="Pineros M.A."/>
            <person name="Cancado G.M."/>
            <person name="Shaff J."/>
            <person name="Kobayashi Y."/>
            <person name="Ryan P.R."/>
            <person name="Dong B."/>
            <person name="Delhaize E."/>
            <person name="Sasaki T."/>
            <person name="Matsumoto H."/>
            <person name="Yamamoto Y."/>
            <person name="Koyama H."/>
            <person name="Kochian L.V."/>
        </authorList>
    </citation>
    <scope>GENE FAMILY</scope>
    <scope>NOMENCLATURE</scope>
</reference>
<gene>
    <name type="primary">ALMT2</name>
    <name type="ordered locus">At1g08440</name>
    <name type="ORF">T27G7.12</name>
</gene>
<name>ALMT2_ARATH</name>
<keyword id="KW-0407">Ion channel</keyword>
<keyword id="KW-0406">Ion transport</keyword>
<keyword id="KW-0472">Membrane</keyword>
<keyword id="KW-1185">Reference proteome</keyword>
<keyword id="KW-0812">Transmembrane</keyword>
<keyword id="KW-1133">Transmembrane helix</keyword>
<keyword id="KW-0813">Transport</keyword>
<feature type="chain" id="PRO_0000401461" description="Aluminum-activated malate transporter 2">
    <location>
        <begin position="1"/>
        <end position="501"/>
    </location>
</feature>
<feature type="transmembrane region" description="Helical" evidence="2">
    <location>
        <begin position="22"/>
        <end position="42"/>
    </location>
</feature>
<feature type="transmembrane region" description="Helical" evidence="2">
    <location>
        <begin position="52"/>
        <end position="72"/>
    </location>
</feature>
<feature type="transmembrane region" description="Helical" evidence="2">
    <location>
        <begin position="78"/>
        <end position="98"/>
    </location>
</feature>
<feature type="transmembrane region" description="Helical" evidence="2">
    <location>
        <begin position="101"/>
        <end position="121"/>
    </location>
</feature>
<feature type="transmembrane region" description="Helical" evidence="2">
    <location>
        <begin position="130"/>
        <end position="150"/>
    </location>
</feature>
<feature type="transmembrane region" description="Helical" evidence="2">
    <location>
        <begin position="166"/>
        <end position="186"/>
    </location>
</feature>
<feature type="region of interest" description="Disordered" evidence="3">
    <location>
        <begin position="398"/>
        <end position="425"/>
    </location>
</feature>
<dbReference type="EMBL" id="AC006932">
    <property type="protein sequence ID" value="AAF22891.1"/>
    <property type="status" value="ALT_SEQ"/>
    <property type="molecule type" value="Genomic_DNA"/>
</dbReference>
<dbReference type="EMBL" id="CP002684">
    <property type="protein sequence ID" value="AEE28290.1"/>
    <property type="molecule type" value="Genomic_DNA"/>
</dbReference>
<dbReference type="PIR" id="F86217">
    <property type="entry name" value="F86217"/>
</dbReference>
<dbReference type="RefSeq" id="NP_172320.1">
    <property type="nucleotide sequence ID" value="NM_100717.2"/>
</dbReference>
<dbReference type="SMR" id="Q9SJE8"/>
<dbReference type="STRING" id="3702.Q9SJE8"/>
<dbReference type="PaxDb" id="3702-AT1G08440.1"/>
<dbReference type="EnsemblPlants" id="AT1G08440.1">
    <property type="protein sequence ID" value="AT1G08440.1"/>
    <property type="gene ID" value="AT1G08440"/>
</dbReference>
<dbReference type="GeneID" id="837364"/>
<dbReference type="Gramene" id="AT1G08440.1">
    <property type="protein sequence ID" value="AT1G08440.1"/>
    <property type="gene ID" value="AT1G08440"/>
</dbReference>
<dbReference type="KEGG" id="ath:AT1G08440"/>
<dbReference type="Araport" id="AT1G08440"/>
<dbReference type="TAIR" id="AT1G08440"/>
<dbReference type="eggNOG" id="KOG4711">
    <property type="taxonomic scope" value="Eukaryota"/>
</dbReference>
<dbReference type="HOGENOM" id="CLU_020841_2_2_1"/>
<dbReference type="InParanoid" id="Q9SJE8"/>
<dbReference type="OMA" id="CACRIDA"/>
<dbReference type="PhylomeDB" id="Q9SJE8"/>
<dbReference type="PRO" id="PR:Q9SJE8"/>
<dbReference type="Proteomes" id="UP000006548">
    <property type="component" value="Chromosome 1"/>
</dbReference>
<dbReference type="ExpressionAtlas" id="Q9SJE8">
    <property type="expression patterns" value="baseline and differential"/>
</dbReference>
<dbReference type="GO" id="GO:0016020">
    <property type="term" value="C:membrane"/>
    <property type="evidence" value="ECO:0007669"/>
    <property type="project" value="UniProtKB-SubCell"/>
</dbReference>
<dbReference type="GO" id="GO:0015743">
    <property type="term" value="P:malate transport"/>
    <property type="evidence" value="ECO:0007669"/>
    <property type="project" value="InterPro"/>
</dbReference>
<dbReference type="GO" id="GO:0034220">
    <property type="term" value="P:monoatomic ion transmembrane transport"/>
    <property type="evidence" value="ECO:0007669"/>
    <property type="project" value="UniProtKB-KW"/>
</dbReference>
<dbReference type="InterPro" id="IPR020966">
    <property type="entry name" value="ALMT"/>
</dbReference>
<dbReference type="PANTHER" id="PTHR31086">
    <property type="entry name" value="ALUMINUM-ACTIVATED MALATE TRANSPORTER 10"/>
    <property type="match status" value="1"/>
</dbReference>
<dbReference type="Pfam" id="PF11744">
    <property type="entry name" value="ALMT"/>
    <property type="match status" value="1"/>
</dbReference>
<protein>
    <recommendedName>
        <fullName>Aluminum-activated malate transporter 2</fullName>
        <shortName>AtALMT2</shortName>
    </recommendedName>
</protein>
<evidence type="ECO:0000250" key="1"/>
<evidence type="ECO:0000255" key="2"/>
<evidence type="ECO:0000256" key="3">
    <source>
        <dbReference type="SAM" id="MobiDB-lite"/>
    </source>
</evidence>
<evidence type="ECO:0000269" key="4">
    <source>
    </source>
</evidence>
<evidence type="ECO:0000305" key="5"/>
<sequence>MEKVREIVREGRRVGKEDPRRVVHAFKVGLALALVSSFYYYQPLYDNFGVNAMWAVMTVVVVFEFSVGATLGKGLNRAVATLVAGGLGIGAHHLASLSGPTVEPILLAIFVFVLAALSTFVRFFPRVKARYDYGVLIFILTFALISVSGFREDEILDLAHKRLSTVIMGGVSCVLISIFVCPVWAGQDLHSLLASNFDTLSHFLQEFGDEYFEATEDGDIKEVEKRRRNLERYKSVLNSKSNEEALANFAKWEPRHGQFRFRHPWRQYLAVGALLRQSAYRIDALNSNINSDMQIPMDIKKKIEEPLRRMSSESGKSMKEVSISLKNMTISSSFDIHVVNSQSACKTLSTLLKSGILNDVEPLQMISLMTTVSLLIDIVNLTEKISESVHELASAAKFKNKKKPSKSNSGSIGQAMPNKSHDDDDHVVTILGDVDTSNNVDQSQSHGEISVDSCHHVTIKINDDDSIHDKNEDGDIHVHTNRVSCDHTNASDLLDSGVKKN</sequence>
<organism>
    <name type="scientific">Arabidopsis thaliana</name>
    <name type="common">Mouse-ear cress</name>
    <dbReference type="NCBI Taxonomy" id="3702"/>
    <lineage>
        <taxon>Eukaryota</taxon>
        <taxon>Viridiplantae</taxon>
        <taxon>Streptophyta</taxon>
        <taxon>Embryophyta</taxon>
        <taxon>Tracheophyta</taxon>
        <taxon>Spermatophyta</taxon>
        <taxon>Magnoliopsida</taxon>
        <taxon>eudicotyledons</taxon>
        <taxon>Gunneridae</taxon>
        <taxon>Pentapetalae</taxon>
        <taxon>rosids</taxon>
        <taxon>malvids</taxon>
        <taxon>Brassicales</taxon>
        <taxon>Brassicaceae</taxon>
        <taxon>Camelineae</taxon>
        <taxon>Arabidopsis</taxon>
    </lineage>
</organism>
<comment type="function">
    <text evidence="1">Malate transporter.</text>
</comment>
<comment type="subcellular location">
    <subcellularLocation>
        <location evidence="5">Membrane</location>
        <topology evidence="5">Multi-pass membrane protein</topology>
    </subcellularLocation>
</comment>
<comment type="induction">
    <text evidence="4">Up-regulated by aluminum.</text>
</comment>
<comment type="similarity">
    <text evidence="5">Belongs to the aromatic acid exporter (TC 2.A.85) family.</text>
</comment>
<comment type="sequence caution" evidence="5">
    <conflict type="erroneous gene model prediction">
        <sequence resource="EMBL-CDS" id="AAF22891"/>
    </conflict>
</comment>
<accession>Q9SJE8</accession>
<proteinExistence type="evidence at transcript level"/>